<evidence type="ECO:0000250" key="1">
    <source>
        <dbReference type="UniProtKB" id="B1B0V2"/>
    </source>
</evidence>
<evidence type="ECO:0000256" key="2">
    <source>
        <dbReference type="SAM" id="MobiDB-lite"/>
    </source>
</evidence>
<evidence type="ECO:0000269" key="3">
    <source>
    </source>
</evidence>
<evidence type="ECO:0000269" key="4">
    <source>
    </source>
</evidence>
<evidence type="ECO:0000269" key="5">
    <source>
    </source>
</evidence>
<evidence type="ECO:0000269" key="6">
    <source>
    </source>
</evidence>
<evidence type="ECO:0000305" key="7"/>
<evidence type="ECO:0000312" key="8">
    <source>
        <dbReference type="HGNC" id="HGNC:33738"/>
    </source>
</evidence>
<evidence type="ECO:0007744" key="9">
    <source>
    </source>
</evidence>
<feature type="chain" id="PRO_0000319058" description="EZH inhibitory protein">
    <location>
        <begin position="1"/>
        <end position="503"/>
    </location>
</feature>
<feature type="region of interest" description="Disordered" evidence="2">
    <location>
        <begin position="1"/>
        <end position="72"/>
    </location>
</feature>
<feature type="region of interest" description="Disordered" evidence="2">
    <location>
        <begin position="97"/>
        <end position="462"/>
    </location>
</feature>
<feature type="region of interest" description="Sufficient for interaction with EZH2" evidence="4">
    <location>
        <begin position="401"/>
        <end position="409"/>
    </location>
</feature>
<feature type="region of interest" description="Necessary and sufficient for inhibition of PRC2/EED-EZH1 and PRC2/EED-EZH2 complex activity" evidence="5">
    <location>
        <begin position="403"/>
        <end position="423"/>
    </location>
</feature>
<feature type="region of interest" description="Disordered" evidence="2">
    <location>
        <begin position="483"/>
        <end position="503"/>
    </location>
</feature>
<feature type="compositionally biased region" description="Basic and acidic residues" evidence="2">
    <location>
        <begin position="1"/>
        <end position="16"/>
    </location>
</feature>
<feature type="compositionally biased region" description="Low complexity" evidence="2">
    <location>
        <begin position="41"/>
        <end position="72"/>
    </location>
</feature>
<feature type="compositionally biased region" description="Basic and acidic residues" evidence="2">
    <location>
        <begin position="97"/>
        <end position="107"/>
    </location>
</feature>
<feature type="compositionally biased region" description="Polar residues" evidence="2">
    <location>
        <begin position="184"/>
        <end position="197"/>
    </location>
</feature>
<feature type="compositionally biased region" description="Low complexity" evidence="2">
    <location>
        <begin position="345"/>
        <end position="366"/>
    </location>
</feature>
<feature type="compositionally biased region" description="Low complexity" evidence="2">
    <location>
        <begin position="428"/>
        <end position="453"/>
    </location>
</feature>
<feature type="modified residue" description="Phosphoserine" evidence="9">
    <location>
        <position position="259"/>
    </location>
</feature>
<feature type="sequence variant" id="VAR_038938" description="In dbSNP:rs1875755.">
    <original>R</original>
    <variation>K</variation>
    <location>
        <position position="470"/>
    </location>
</feature>
<feature type="mutagenesis site" description="Decreases inhibition of H3K27me3." evidence="3">
    <original>T</original>
    <variation>S</variation>
    <location>
        <position position="73"/>
    </location>
</feature>
<feature type="mutagenesis site" description="No effect on H3K27me3 levels." evidence="5">
    <original>D</original>
    <variation>Y</variation>
    <location>
        <position position="81"/>
    </location>
</feature>
<feature type="mutagenesis site" description="Slightly decreases inhibition of H3K27me3." evidence="3">
    <original>I</original>
    <variation>F</variation>
    <location>
        <position position="88"/>
    </location>
</feature>
<feature type="mutagenesis site" description="Decreases inhibition of H3K27me3." evidence="3">
    <original>Y</original>
    <variation>C</variation>
    <location>
        <position position="184"/>
    </location>
</feature>
<feature type="mutagenesis site" description="Abolishes interaction with the PRC2 complex and causes increased H3K27me3 levels." evidence="6">
    <location>
        <begin position="394"/>
        <end position="417"/>
    </location>
</feature>
<feature type="mutagenesis site" description="Does not inhibit PRC2/EED-EZH2 complex activity and abolishes ability to decrease H3K27me3 levels." evidence="5">
    <original>R</original>
    <variation>E</variation>
    <location>
        <position position="405"/>
    </location>
</feature>
<feature type="mutagenesis site" description="Does not act as a substrate of the PRC2/EED-EZH2 complex." evidence="5">
    <original>M</original>
    <variation>A</variation>
    <location>
        <position position="406"/>
    </location>
</feature>
<feature type="mutagenesis site" description="Does not reduce H3K27me3 levels." evidence="5">
    <original>M</original>
    <variation>E</variation>
    <variation>R</variation>
    <location>
        <position position="406"/>
    </location>
</feature>
<feature type="mutagenesis site" description="Does not affect inhibition of H3K27me3 levels." evidence="5">
    <original>M</original>
    <variation>I</variation>
    <location>
        <position position="406"/>
    </location>
</feature>
<feature type="mutagenesis site" description="Acts as a substrate of the PRC2/EED-EZH2 complex and does not reduce H3K27me3 levels." evidence="5">
    <original>M</original>
    <variation>K</variation>
    <location>
        <position position="406"/>
    </location>
</feature>
<feature type="mutagenesis site" description="No effect on H3K27me3 levels." evidence="5">
    <original>R</original>
    <variation>E</variation>
    <location>
        <position position="407"/>
    </location>
</feature>
<gene>
    <name evidence="8" type="primary">EZHIP</name>
    <name evidence="8" type="synonym">CXorf67</name>
</gene>
<reference key="1">
    <citation type="submission" date="2005-09" db="EMBL/GenBank/DDBJ databases">
        <authorList>
            <person name="Mural R.J."/>
            <person name="Istrail S."/>
            <person name="Sutton G.G."/>
            <person name="Florea L."/>
            <person name="Halpern A.L."/>
            <person name="Mobarry C.M."/>
            <person name="Lippert R."/>
            <person name="Walenz B."/>
            <person name="Shatkay H."/>
            <person name="Dew I."/>
            <person name="Miller J.R."/>
            <person name="Flanigan M.J."/>
            <person name="Edwards N.J."/>
            <person name="Bolanos R."/>
            <person name="Fasulo D."/>
            <person name="Halldorsson B.V."/>
            <person name="Hannenhalli S."/>
            <person name="Turner R."/>
            <person name="Yooseph S."/>
            <person name="Lu F."/>
            <person name="Nusskern D.R."/>
            <person name="Shue B.C."/>
            <person name="Zheng X.H."/>
            <person name="Zhong F."/>
            <person name="Delcher A.L."/>
            <person name="Huson D.H."/>
            <person name="Kravitz S.A."/>
            <person name="Mouchard L."/>
            <person name="Reinert K."/>
            <person name="Remington K.A."/>
            <person name="Clark A.G."/>
            <person name="Waterman M.S."/>
            <person name="Eichler E.E."/>
            <person name="Adams M.D."/>
            <person name="Hunkapiller M.W."/>
            <person name="Myers E.W."/>
            <person name="Venter J.C."/>
        </authorList>
    </citation>
    <scope>NUCLEOTIDE SEQUENCE [LARGE SCALE GENOMIC DNA]</scope>
</reference>
<reference key="2">
    <citation type="journal article" date="2004" name="Genome Res.">
        <title>The status, quality, and expansion of the NIH full-length cDNA project: the Mammalian Gene Collection (MGC).</title>
        <authorList>
            <consortium name="The MGC Project Team"/>
        </authorList>
    </citation>
    <scope>NUCLEOTIDE SEQUENCE [LARGE SCALE MRNA]</scope>
    <source>
        <tissue>Skin</tissue>
    </source>
</reference>
<reference key="3">
    <citation type="journal article" date="2013" name="J. Proteome Res.">
        <title>Toward a comprehensive characterization of a human cancer cell phosphoproteome.</title>
        <authorList>
            <person name="Zhou H."/>
            <person name="Di Palma S."/>
            <person name="Preisinger C."/>
            <person name="Peng M."/>
            <person name="Polat A.N."/>
            <person name="Heck A.J."/>
            <person name="Mohammed S."/>
        </authorList>
    </citation>
    <scope>PHOSPHORYLATION [LARGE SCALE ANALYSIS] AT SER-259</scope>
    <scope>IDENTIFICATION BY MASS SPECTROMETRY [LARGE SCALE ANALYSIS]</scope>
    <source>
        <tissue>Erythroleukemia</tissue>
    </source>
</reference>
<reference key="4">
    <citation type="journal article" date="2018" name="Acta Neuropathol.">
        <title>Molecular heterogeneity and CXorf67 alterations in posterior fossa group A (PFA) ependymomas.</title>
        <authorList>
            <person name="Pajtler K.W."/>
            <person name="Wen J."/>
            <person name="Sill M."/>
            <person name="Lin T."/>
            <person name="Orisme W."/>
            <person name="Tang B."/>
            <person name="Huebner J.M."/>
            <person name="Ramaswamy V."/>
            <person name="Jia S."/>
            <person name="Dalton J.D."/>
            <person name="Haupfear K."/>
            <person name="Rogers H.A."/>
            <person name="Punchihewa C."/>
            <person name="Lee R."/>
            <person name="Easton J."/>
            <person name="Wu G."/>
            <person name="Ritzmann T.A."/>
            <person name="Chapman R."/>
            <person name="Chavez L."/>
            <person name="Boop F.A."/>
            <person name="Klimo P."/>
            <person name="Sabin N.D."/>
            <person name="Ogg R."/>
            <person name="Mack S.C."/>
            <person name="Freibaum B.D."/>
            <person name="Kim H.J."/>
            <person name="Witt H."/>
            <person name="Jones D.T.W."/>
            <person name="Vo B."/>
            <person name="Gajjar A."/>
            <person name="Pounds S."/>
            <person name="Onar-Thomas A."/>
            <person name="Roussel M.F."/>
            <person name="Zhang J."/>
            <person name="Taylor J.P."/>
            <person name="Merchant T.E."/>
            <person name="Grundy R."/>
            <person name="Tatevossian R.G."/>
            <person name="Taylor M.D."/>
            <person name="Pfister S.M."/>
            <person name="Korshunov A."/>
            <person name="Kool M."/>
            <person name="Ellison D.W."/>
        </authorList>
    </citation>
    <scope>FUNCTION</scope>
    <scope>INTERACTION WITH EZH2 AND SUZ12</scope>
    <scope>SUBCELLULAR LOCATION</scope>
    <scope>MUTAGENESIS OF THR-73; ILE-88 AND TYR-184</scope>
</reference>
<reference key="5">
    <citation type="journal article" date="2019" name="Nat. Commun.">
        <title>PFA ependymoma-associated protein EZHIP inhibits PRC2 activity through a H3 K27M-like mechanism.</title>
        <authorList>
            <person name="Jain S.U."/>
            <person name="Do T.J."/>
            <person name="Lund P.J."/>
            <person name="Rashoff A.Q."/>
            <person name="Diehl K.L."/>
            <person name="Cieslik M."/>
            <person name="Bajic A."/>
            <person name="Juretic N."/>
            <person name="Deshmukh S."/>
            <person name="Venneti S."/>
            <person name="Muir T.W."/>
            <person name="Garcia B.A."/>
            <person name="Jabado N."/>
            <person name="Lewis P.W."/>
        </authorList>
    </citation>
    <scope>FUNCTION</scope>
    <scope>SUBCELLULAR LOCATION</scope>
    <scope>INTERACTION WITH EZH2</scope>
    <scope>REGION</scope>
    <scope>MUTAGENESIS OF ASP-81; ARG-405; MET-406 AND ARG-407</scope>
</reference>
<reference key="6">
    <citation type="journal article" date="2019" name="Nat. Commun.">
        <title>EZHIP constrains Polycomb Repressive Complex 2 activity in germ cells.</title>
        <authorList>
            <person name="Ragazzini R."/>
            <person name="Perez-Palacios R."/>
            <person name="Baymaz I.H."/>
            <person name="Diop S."/>
            <person name="Ancelin K."/>
            <person name="Zielinski D."/>
            <person name="Michaud A."/>
            <person name="Givelet M."/>
            <person name="Borsos M."/>
            <person name="Aflaki S."/>
            <person name="Legoix P."/>
            <person name="Jansen P.W.T.C."/>
            <person name="Servant N."/>
            <person name="Torres-Padilla M.E."/>
            <person name="Bourc'his D."/>
            <person name="Fouchet P."/>
            <person name="Vermeulen M."/>
            <person name="Margueron R."/>
        </authorList>
    </citation>
    <scope>FUNCTION</scope>
    <scope>INTERACTION WITH EZH1 AND EZH2</scope>
    <scope>SUBCELLULAR LOCATION</scope>
    <scope>TISSUE SPECIFICITY</scope>
    <scope>MUTAGENESIS OF 394-SER--PHE-417</scope>
</reference>
<reference key="7">
    <citation type="journal article" date="2019" name="Neuro-oncol.">
        <title>EZHIP / CXorf67 mimics K27M mutated oncohistones and functions as an intrinsic inhibitor of PRC2 function in aggressive posterior fossa ependymoma.</title>
        <authorList>
            <person name="Huebner J.M."/>
            <person name="Mueller T."/>
            <person name="Papageorgiou D.N."/>
            <person name="Mauermann M."/>
            <person name="Krijgsveld J."/>
            <person name="Russell R.B."/>
            <person name="Ellison D.W."/>
            <person name="Pfister S.M."/>
            <person name="Pajtler K.W."/>
            <person name="Kool M."/>
        </authorList>
    </citation>
    <scope>FUNCTION</scope>
    <scope>INTERACTION WITH EZH2 AND SUZ12</scope>
    <scope>SUBCELLULAR LOCATION</scope>
</reference>
<comment type="function">
    <text evidence="1 3 4 5 6">Inhibits PRC2/EED-EZH1 and PRC2/EED-EZH2 complex function by inhibiting EZH1/EZH2 methyltransferase activity, thereby causing down-regulation of histone H3 trimethylation on 'Lys-27' (H3K27me3) (PubMed:29909548, PubMed:30923826, PubMed:31086175, PubMed:31451685). Probably inhibits methyltransferase activity by limiting the stimulatory effect of cofactors such as AEBP2 and JARID2 (PubMed:30923826). Inhibits H3K27me3 deposition during spermatogenesis and oogenesis (By similarity).</text>
</comment>
<comment type="subunit">
    <text evidence="3 4 5 6">Interacts with PRC2/EED-EZH1 complex member EZH1 and with PRC2/EED-EZH2 complex member EZH2; the interaction blocks EZH1/EZH2 methyltransferase activity (PubMed:29909548, PubMed:30923826, PubMed:31086175, PubMed:31451685). Interacts (via C-terminus) with SUZ12 which is a member of the PRC2/EED-EZH1 and PRC2/EED-EZH2 complexes (PubMed:29909548, PubMed:30923826).</text>
</comment>
<comment type="interaction">
    <interactant intactId="EBI-12827735">
        <id>Q86X51</id>
    </interactant>
    <interactant intactId="EBI-744099">
        <id>Q9H0I2</id>
        <label>ENKD1</label>
    </interactant>
    <organismsDiffer>false</organismsDiffer>
    <experiments>3</experiments>
</comment>
<comment type="interaction">
    <interactant intactId="EBI-12827735">
        <id>Q86X51</id>
    </interactant>
    <interactant intactId="EBI-748391">
        <id>Q9BWG6</id>
        <label>SCNM1</label>
    </interactant>
    <organismsDiffer>false</organismsDiffer>
    <experiments>3</experiments>
</comment>
<comment type="interaction">
    <interactant intactId="EBI-12827735">
        <id>Q86X51</id>
    </interactant>
    <interactant intactId="EBI-3650647">
        <id>Q9BUZ4</id>
        <label>TRAF4</label>
    </interactant>
    <organismsDiffer>false</organismsDiffer>
    <experiments>3</experiments>
</comment>
<comment type="interaction">
    <interactant intactId="EBI-12827735">
        <id>Q86X51</id>
    </interactant>
    <interactant intactId="EBI-725997">
        <id>Q8WV44</id>
        <label>TRIM41</label>
    </interactant>
    <organismsDiffer>false</organismsDiffer>
    <experiments>3</experiments>
</comment>
<comment type="interaction">
    <interactant intactId="EBI-12827735">
        <id>Q86X51</id>
    </interactant>
    <interactant intactId="EBI-740727">
        <id>Q8TAU3</id>
        <label>ZNF417</label>
    </interactant>
    <organismsDiffer>false</organismsDiffer>
    <experiments>3</experiments>
</comment>
<comment type="subcellular location">
    <subcellularLocation>
        <location evidence="3 4 5">Nucleus</location>
    </subcellularLocation>
    <subcellularLocation>
        <location evidence="4">Cytoplasm</location>
    </subcellularLocation>
</comment>
<comment type="tissue specificity">
    <text evidence="6">In testis, detected in male germ cells inside the seminiferous tubules, especially in spermatogonia and round spermatids (at protein level) (PubMed:31451685). In the ovary, expressed in primordial follicles and oocytes but not the external follicle cells (at protein level) (PubMed:31451685).</text>
</comment>
<proteinExistence type="evidence at protein level"/>
<keyword id="KW-0963">Cytoplasm</keyword>
<keyword id="KW-0539">Nucleus</keyword>
<keyword id="KW-0597">Phosphoprotein</keyword>
<keyword id="KW-1267">Proteomics identification</keyword>
<keyword id="KW-1185">Reference proteome</keyword>
<name>EZHIP_HUMAN</name>
<protein>
    <recommendedName>
        <fullName evidence="7">EZH inhibitory protein</fullName>
    </recommendedName>
</protein>
<sequence length="503" mass="51894">MATQSDMEKEQKHQQDEGQGGLNNETALASGDACGTGNQDPAASVTTVSSQASPSGGAALSSSTAGSSAAAATSAAIFITDEASGLPIIAAVLTERHSDRQDCRSPHEVFGCVVPEGGSQAAVGPQKATGHADEHLAQTKSPGNSRRRKQPCRNQAAPAQKPPGRRLFPEPLPPSSPGFRPSSYPCSGASTSSQATQPGPALLSHASEARPATRSRITLVASALRRRASGPGPVIRGCTAQPGPAFPHRATHLDPARLSPESAPGPARRGRASVPGPARRGCDSAPGPARRGRDSAPVSAPRGRDSAPGSARRGRDSAPGPALRVRTARSDAGHRSTSTTPGTGLRSRSTQQRSALLSRRSLSGSADENPSCGTGSERLAFQSRSGSPDPEVPSRASPPVWHAVRMRASSPSPPGRFFLPIPQQWDESSSSSYASNSSSPSRSPGLSPSSPSPEFLGLRSISTPSPESLRYALMPEFYALSPVPPEEQAEIESTAHPATPPEP</sequence>
<accession>Q86X51</accession>
<organism>
    <name type="scientific">Homo sapiens</name>
    <name type="common">Human</name>
    <dbReference type="NCBI Taxonomy" id="9606"/>
    <lineage>
        <taxon>Eukaryota</taxon>
        <taxon>Metazoa</taxon>
        <taxon>Chordata</taxon>
        <taxon>Craniata</taxon>
        <taxon>Vertebrata</taxon>
        <taxon>Euteleostomi</taxon>
        <taxon>Mammalia</taxon>
        <taxon>Eutheria</taxon>
        <taxon>Euarchontoglires</taxon>
        <taxon>Primates</taxon>
        <taxon>Haplorrhini</taxon>
        <taxon>Catarrhini</taxon>
        <taxon>Hominidae</taxon>
        <taxon>Homo</taxon>
    </lineage>
</organism>
<dbReference type="EMBL" id="CH471180">
    <property type="protein sequence ID" value="EAW89908.1"/>
    <property type="molecule type" value="Genomic_DNA"/>
</dbReference>
<dbReference type="EMBL" id="BC046248">
    <property type="protein sequence ID" value="AAH46248.1"/>
    <property type="molecule type" value="mRNA"/>
</dbReference>
<dbReference type="CCDS" id="CCDS78485.1"/>
<dbReference type="RefSeq" id="NP_981952.1">
    <property type="nucleotide sequence ID" value="NM_203407.3"/>
</dbReference>
<dbReference type="BioGRID" id="131086">
    <property type="interactions" value="15"/>
</dbReference>
<dbReference type="FunCoup" id="Q86X51">
    <property type="interactions" value="8"/>
</dbReference>
<dbReference type="IntAct" id="Q86X51">
    <property type="interactions" value="7"/>
</dbReference>
<dbReference type="STRING" id="9606.ENSP00000342680"/>
<dbReference type="GlyGen" id="Q86X51">
    <property type="glycosylation" value="1 site, 1 O-linked glycan (1 site)"/>
</dbReference>
<dbReference type="iPTMnet" id="Q86X51"/>
<dbReference type="PhosphoSitePlus" id="Q86X51"/>
<dbReference type="BioMuta" id="CXorf67"/>
<dbReference type="DMDM" id="74727770"/>
<dbReference type="MassIVE" id="Q86X51"/>
<dbReference type="PaxDb" id="9606-ENSP00000342680"/>
<dbReference type="PeptideAtlas" id="Q86X51"/>
<dbReference type="ProteomicsDB" id="70238"/>
<dbReference type="Pumba" id="Q86X51"/>
<dbReference type="Antibodypedia" id="57010">
    <property type="antibodies" value="29 antibodies from 10 providers"/>
</dbReference>
<dbReference type="DNASU" id="340602"/>
<dbReference type="Ensembl" id="ENST00000342995.4">
    <property type="protein sequence ID" value="ENSP00000342680.2"/>
    <property type="gene ID" value="ENSG00000187690.4"/>
</dbReference>
<dbReference type="GeneID" id="340602"/>
<dbReference type="KEGG" id="hsa:340602"/>
<dbReference type="MANE-Select" id="ENST00000342995.4">
    <property type="protein sequence ID" value="ENSP00000342680.2"/>
    <property type="RefSeq nucleotide sequence ID" value="NM_203407.3"/>
    <property type="RefSeq protein sequence ID" value="NP_981952.1"/>
</dbReference>
<dbReference type="UCSC" id="uc064zgx.1">
    <property type="organism name" value="human"/>
</dbReference>
<dbReference type="AGR" id="HGNC:33738"/>
<dbReference type="CTD" id="340602"/>
<dbReference type="DisGeNET" id="340602"/>
<dbReference type="GeneCards" id="EZHIP"/>
<dbReference type="HGNC" id="HGNC:33738">
    <property type="gene designation" value="EZHIP"/>
</dbReference>
<dbReference type="HPA" id="ENSG00000187690">
    <property type="expression patterns" value="Tissue enhanced (brain, testis)"/>
</dbReference>
<dbReference type="MIM" id="301036">
    <property type="type" value="gene"/>
</dbReference>
<dbReference type="neXtProt" id="NX_Q86X51"/>
<dbReference type="OpenTargets" id="ENSG00000187690"/>
<dbReference type="VEuPathDB" id="HostDB:ENSG00000187690"/>
<dbReference type="eggNOG" id="ENOG502SFSJ">
    <property type="taxonomic scope" value="Eukaryota"/>
</dbReference>
<dbReference type="GeneTree" id="ENSGT00390000008621"/>
<dbReference type="HOGENOM" id="CLU_028741_0_0_1"/>
<dbReference type="InParanoid" id="Q86X51"/>
<dbReference type="OMA" id="IRRCTAQ"/>
<dbReference type="OrthoDB" id="9751586at2759"/>
<dbReference type="PAN-GO" id="Q86X51">
    <property type="GO annotations" value="2 GO annotations based on evolutionary models"/>
</dbReference>
<dbReference type="PhylomeDB" id="Q86X51"/>
<dbReference type="TreeFam" id="TF341924"/>
<dbReference type="PathwayCommons" id="Q86X51"/>
<dbReference type="SignaLink" id="Q86X51"/>
<dbReference type="BioGRID-ORCS" id="340602">
    <property type="hits" value="1 hit in 166 CRISPR screens"/>
</dbReference>
<dbReference type="GenomeRNAi" id="340602"/>
<dbReference type="Pharos" id="Q86X51">
    <property type="development level" value="Tdark"/>
</dbReference>
<dbReference type="PRO" id="PR:Q86X51"/>
<dbReference type="Proteomes" id="UP000005640">
    <property type="component" value="Chromosome X"/>
</dbReference>
<dbReference type="RNAct" id="Q86X51">
    <property type="molecule type" value="protein"/>
</dbReference>
<dbReference type="Bgee" id="ENSG00000187690">
    <property type="expression patterns" value="Expressed in secondary oocyte and 59 other cell types or tissues"/>
</dbReference>
<dbReference type="ExpressionAtlas" id="Q86X51">
    <property type="expression patterns" value="baseline and differential"/>
</dbReference>
<dbReference type="GO" id="GO:0005829">
    <property type="term" value="C:cytosol"/>
    <property type="evidence" value="ECO:0000314"/>
    <property type="project" value="UniProtKB"/>
</dbReference>
<dbReference type="GO" id="GO:0005654">
    <property type="term" value="C:nucleoplasm"/>
    <property type="evidence" value="ECO:0000314"/>
    <property type="project" value="HPA"/>
</dbReference>
<dbReference type="GO" id="GO:0005634">
    <property type="term" value="C:nucleus"/>
    <property type="evidence" value="ECO:0000314"/>
    <property type="project" value="UniProtKB"/>
</dbReference>
<dbReference type="GO" id="GO:0180000">
    <property type="term" value="F:histone methyltransferase inhibitor activity"/>
    <property type="evidence" value="ECO:0000314"/>
    <property type="project" value="UniProtKB"/>
</dbReference>
<dbReference type="GO" id="GO:0006325">
    <property type="term" value="P:chromatin organization"/>
    <property type="evidence" value="ECO:0000314"/>
    <property type="project" value="UniProtKB"/>
</dbReference>
<dbReference type="GO" id="GO:0040029">
    <property type="term" value="P:epigenetic regulation of gene expression"/>
    <property type="evidence" value="ECO:0000314"/>
    <property type="project" value="UniProtKB"/>
</dbReference>
<dbReference type="InterPro" id="IPR052882">
    <property type="entry name" value="EZH_Inhibitor"/>
</dbReference>
<dbReference type="PANTHER" id="PTHR22467:SF1">
    <property type="entry name" value="EZH INHIBITORY PROTEIN"/>
    <property type="match status" value="1"/>
</dbReference>
<dbReference type="PANTHER" id="PTHR22467">
    <property type="entry name" value="EZH INHIBITORY PROTEIN-RELATED"/>
    <property type="match status" value="1"/>
</dbReference>